<dbReference type="EMBL" id="AK095502">
    <property type="protein sequence ID" value="BAC04560.1"/>
    <property type="molecule type" value="mRNA"/>
</dbReference>
<dbReference type="EMBL" id="AK300660">
    <property type="protein sequence ID" value="BAG62346.1"/>
    <property type="molecule type" value="mRNA"/>
</dbReference>
<dbReference type="EMBL" id="AC007998">
    <property type="status" value="NOT_ANNOTATED_CDS"/>
    <property type="molecule type" value="Genomic_DNA"/>
</dbReference>
<dbReference type="EMBL" id="BC039404">
    <property type="protein sequence ID" value="AAH39404.1"/>
    <property type="molecule type" value="mRNA"/>
</dbReference>
<dbReference type="CCDS" id="CCDS11914.1">
    <molecule id="Q6PI98-1"/>
</dbReference>
<dbReference type="CCDS" id="CCDS45853.1">
    <molecule id="Q6PI98-4"/>
</dbReference>
<dbReference type="RefSeq" id="NP_001092287.1">
    <molecule id="Q6PI98-4"/>
    <property type="nucleotide sequence ID" value="NM_001098817.2"/>
</dbReference>
<dbReference type="RefSeq" id="NP_919257.2">
    <molecule id="Q6PI98-1"/>
    <property type="nucleotide sequence ID" value="NM_194281.3"/>
</dbReference>
<dbReference type="PDB" id="7ZI4">
    <property type="method" value="EM"/>
    <property type="resolution" value="3.20 A"/>
    <property type="chains" value="Q=1-192"/>
</dbReference>
<dbReference type="PDBsum" id="7ZI4"/>
<dbReference type="EMDB" id="EMD-14737"/>
<dbReference type="SMR" id="Q6PI98"/>
<dbReference type="BioGRID" id="125928">
    <property type="interactions" value="41"/>
</dbReference>
<dbReference type="ComplexPortal" id="CPX-846">
    <property type="entry name" value="INO80 chromatin remodeling complex"/>
</dbReference>
<dbReference type="CORUM" id="Q6PI98"/>
<dbReference type="FunCoup" id="Q6PI98">
    <property type="interactions" value="1056"/>
</dbReference>
<dbReference type="IntAct" id="Q6PI98">
    <property type="interactions" value="29"/>
</dbReference>
<dbReference type="STRING" id="9606.ENSP00000391457"/>
<dbReference type="GlyGen" id="Q6PI98">
    <property type="glycosylation" value="1 site"/>
</dbReference>
<dbReference type="iPTMnet" id="Q6PI98"/>
<dbReference type="PhosphoSitePlus" id="Q6PI98"/>
<dbReference type="BioMuta" id="INO80C"/>
<dbReference type="DMDM" id="68565181"/>
<dbReference type="jPOST" id="Q6PI98"/>
<dbReference type="MassIVE" id="Q6PI98"/>
<dbReference type="PaxDb" id="9606-ENSP00000467041"/>
<dbReference type="PeptideAtlas" id="Q6PI98"/>
<dbReference type="ProteomicsDB" id="19504"/>
<dbReference type="ProteomicsDB" id="67147">
    <molecule id="Q6PI98-1"/>
</dbReference>
<dbReference type="ProteomicsDB" id="67148">
    <molecule id="Q6PI98-3"/>
</dbReference>
<dbReference type="Pumba" id="Q6PI98"/>
<dbReference type="Antibodypedia" id="62486">
    <property type="antibodies" value="25 antibodies from 13 providers"/>
</dbReference>
<dbReference type="DNASU" id="125476"/>
<dbReference type="Ensembl" id="ENST00000334598.12">
    <molecule id="Q6PI98-1"/>
    <property type="protein sequence ID" value="ENSP00000334473.6"/>
    <property type="gene ID" value="ENSG00000153391.16"/>
</dbReference>
<dbReference type="Ensembl" id="ENST00000441607.6">
    <molecule id="Q6PI98-4"/>
    <property type="protein sequence ID" value="ENSP00000391457.1"/>
    <property type="gene ID" value="ENSG00000153391.16"/>
</dbReference>
<dbReference type="Ensembl" id="ENST00000592173.5">
    <molecule id="Q6PI98-3"/>
    <property type="protein sequence ID" value="ENSP00000465273.1"/>
    <property type="gene ID" value="ENSG00000153391.16"/>
</dbReference>
<dbReference type="GeneID" id="125476"/>
<dbReference type="KEGG" id="hsa:125476"/>
<dbReference type="MANE-Select" id="ENST00000334598.12">
    <property type="protein sequence ID" value="ENSP00000334473.6"/>
    <property type="RefSeq nucleotide sequence ID" value="NM_194281.4"/>
    <property type="RefSeq protein sequence ID" value="NP_919257.2"/>
</dbReference>
<dbReference type="UCSC" id="uc002kyw.2">
    <molecule id="Q6PI98-1"/>
    <property type="organism name" value="human"/>
</dbReference>
<dbReference type="AGR" id="HGNC:26994"/>
<dbReference type="CTD" id="125476"/>
<dbReference type="DisGeNET" id="125476"/>
<dbReference type="GeneCards" id="INO80C"/>
<dbReference type="HGNC" id="HGNC:26994">
    <property type="gene designation" value="INO80C"/>
</dbReference>
<dbReference type="HPA" id="ENSG00000153391">
    <property type="expression patterns" value="Low tissue specificity"/>
</dbReference>
<dbReference type="neXtProt" id="NX_Q6PI98"/>
<dbReference type="OpenTargets" id="ENSG00000153391"/>
<dbReference type="PharmGKB" id="PA162392132"/>
<dbReference type="VEuPathDB" id="HostDB:ENSG00000153391"/>
<dbReference type="eggNOG" id="KOG4137">
    <property type="taxonomic scope" value="Eukaryota"/>
</dbReference>
<dbReference type="GeneTree" id="ENSGT00390000014303"/>
<dbReference type="HOGENOM" id="CLU_071116_0_1_1"/>
<dbReference type="InParanoid" id="Q6PI98"/>
<dbReference type="OMA" id="ATTQAQM"/>
<dbReference type="OrthoDB" id="49520at2759"/>
<dbReference type="PAN-GO" id="Q6PI98">
    <property type="GO annotations" value="2 GO annotations based on evolutionary models"/>
</dbReference>
<dbReference type="PhylomeDB" id="Q6PI98"/>
<dbReference type="TreeFam" id="TF323529"/>
<dbReference type="PathwayCommons" id="Q6PI98"/>
<dbReference type="Reactome" id="R-HSA-5689603">
    <property type="pathway name" value="UCH proteinases"/>
</dbReference>
<dbReference type="Reactome" id="R-HSA-5696394">
    <property type="pathway name" value="DNA Damage Recognition in GG-NER"/>
</dbReference>
<dbReference type="SignaLink" id="Q6PI98"/>
<dbReference type="SIGNOR" id="Q6PI98"/>
<dbReference type="BioGRID-ORCS" id="125476">
    <property type="hits" value="48 hits in 1174 CRISPR screens"/>
</dbReference>
<dbReference type="ChiTaRS" id="INO80C">
    <property type="organism name" value="human"/>
</dbReference>
<dbReference type="GenomeRNAi" id="125476"/>
<dbReference type="Pharos" id="Q6PI98">
    <property type="development level" value="Tdark"/>
</dbReference>
<dbReference type="PRO" id="PR:Q6PI98"/>
<dbReference type="Proteomes" id="UP000005640">
    <property type="component" value="Chromosome 18"/>
</dbReference>
<dbReference type="RNAct" id="Q6PI98">
    <property type="molecule type" value="protein"/>
</dbReference>
<dbReference type="Bgee" id="ENSG00000153391">
    <property type="expression patterns" value="Expressed in left testis and 181 other cell types or tissues"/>
</dbReference>
<dbReference type="ExpressionAtlas" id="Q6PI98">
    <property type="expression patterns" value="baseline and differential"/>
</dbReference>
<dbReference type="GO" id="GO:0005829">
    <property type="term" value="C:cytosol"/>
    <property type="evidence" value="ECO:0000314"/>
    <property type="project" value="HPA"/>
</dbReference>
<dbReference type="GO" id="GO:0001650">
    <property type="term" value="C:fibrillar center"/>
    <property type="evidence" value="ECO:0000314"/>
    <property type="project" value="HPA"/>
</dbReference>
<dbReference type="GO" id="GO:0031011">
    <property type="term" value="C:Ino80 complex"/>
    <property type="evidence" value="ECO:0000314"/>
    <property type="project" value="UniProtKB"/>
</dbReference>
<dbReference type="GO" id="GO:0071339">
    <property type="term" value="C:MLL1 complex"/>
    <property type="evidence" value="ECO:0000314"/>
    <property type="project" value="UniProtKB"/>
</dbReference>
<dbReference type="GO" id="GO:0005654">
    <property type="term" value="C:nucleoplasm"/>
    <property type="evidence" value="ECO:0000314"/>
    <property type="project" value="HPA"/>
</dbReference>
<dbReference type="GO" id="GO:0006338">
    <property type="term" value="P:chromatin remodeling"/>
    <property type="evidence" value="ECO:0000314"/>
    <property type="project" value="ComplexPortal"/>
</dbReference>
<dbReference type="GO" id="GO:0006310">
    <property type="term" value="P:DNA recombination"/>
    <property type="evidence" value="ECO:0007669"/>
    <property type="project" value="UniProtKB-KW"/>
</dbReference>
<dbReference type="GO" id="GO:0006281">
    <property type="term" value="P:DNA repair"/>
    <property type="evidence" value="ECO:0007669"/>
    <property type="project" value="UniProtKB-KW"/>
</dbReference>
<dbReference type="GO" id="GO:0045739">
    <property type="term" value="P:positive regulation of DNA repair"/>
    <property type="evidence" value="ECO:0000266"/>
    <property type="project" value="ComplexPortal"/>
</dbReference>
<dbReference type="GO" id="GO:0045893">
    <property type="term" value="P:positive regulation of DNA-templated transcription"/>
    <property type="evidence" value="ECO:0000315"/>
    <property type="project" value="ComplexPortal"/>
</dbReference>
<dbReference type="GO" id="GO:1904507">
    <property type="term" value="P:positive regulation of telomere maintenance in response to DNA damage"/>
    <property type="evidence" value="ECO:0000266"/>
    <property type="project" value="ComplexPortal"/>
</dbReference>
<dbReference type="GO" id="GO:0051726">
    <property type="term" value="P:regulation of cell cycle"/>
    <property type="evidence" value="ECO:0000315"/>
    <property type="project" value="ComplexPortal"/>
</dbReference>
<dbReference type="GO" id="GO:0033044">
    <property type="term" value="P:regulation of chromosome organization"/>
    <property type="evidence" value="ECO:0000315"/>
    <property type="project" value="ComplexPortal"/>
</dbReference>
<dbReference type="GO" id="GO:0006282">
    <property type="term" value="P:regulation of DNA repair"/>
    <property type="evidence" value="ECO:0000266"/>
    <property type="project" value="ComplexPortal"/>
</dbReference>
<dbReference type="GO" id="GO:0006275">
    <property type="term" value="P:regulation of DNA replication"/>
    <property type="evidence" value="ECO:0000315"/>
    <property type="project" value="ComplexPortal"/>
</dbReference>
<dbReference type="GO" id="GO:0060382">
    <property type="term" value="P:regulation of DNA strand elongation"/>
    <property type="evidence" value="ECO:0000315"/>
    <property type="project" value="ComplexPortal"/>
</dbReference>
<dbReference type="GO" id="GO:0045995">
    <property type="term" value="P:regulation of embryonic development"/>
    <property type="evidence" value="ECO:0000266"/>
    <property type="project" value="ComplexPortal"/>
</dbReference>
<dbReference type="GO" id="GO:0000723">
    <property type="term" value="P:telomere maintenance"/>
    <property type="evidence" value="ECO:0000266"/>
    <property type="project" value="ComplexPortal"/>
</dbReference>
<dbReference type="InterPro" id="IPR029525">
    <property type="entry name" value="INO80C/Ies6"/>
</dbReference>
<dbReference type="InterPro" id="IPR013272">
    <property type="entry name" value="Vps72/YL1_C"/>
</dbReference>
<dbReference type="PANTHER" id="PTHR31200">
    <property type="entry name" value="INO80 COMPLEX SUBUNIT C"/>
    <property type="match status" value="1"/>
</dbReference>
<dbReference type="PANTHER" id="PTHR31200:SF1">
    <property type="entry name" value="INO80 COMPLEX SUBUNIT C"/>
    <property type="match status" value="1"/>
</dbReference>
<dbReference type="Pfam" id="PF08265">
    <property type="entry name" value="YL1_C"/>
    <property type="match status" value="1"/>
</dbReference>
<dbReference type="SMART" id="SM00993">
    <property type="entry name" value="YL1_C"/>
    <property type="match status" value="1"/>
</dbReference>
<name>IN80C_HUMAN</name>
<proteinExistence type="evidence at protein level"/>
<keyword id="KW-0002">3D-structure</keyword>
<keyword id="KW-0025">Alternative splicing</keyword>
<keyword id="KW-0227">DNA damage</keyword>
<keyword id="KW-0233">DNA recombination</keyword>
<keyword id="KW-0234">DNA repair</keyword>
<keyword id="KW-0539">Nucleus</keyword>
<keyword id="KW-1267">Proteomics identification</keyword>
<keyword id="KW-1185">Reference proteome</keyword>
<keyword id="KW-0804">Transcription</keyword>
<keyword id="KW-0805">Transcription regulation</keyword>
<sequence>MAAQIPIVATTSTPGIVRNSKKRPASPSHNGSSGGGYGASKKKKASASSFAQGISMEAMSENKMVPSEFSTGPVEKAAKPLPFKDPNFVHSGHGGAVAGKKNRTWKNLKQILASERALPWQLNDPNYFSIDAPPSFKPAKKYSDVSGLLANYTDPQSKLRFSTIEEFSYIRRLPSDVVTGYLALRKATSIVP</sequence>
<organism>
    <name type="scientific">Homo sapiens</name>
    <name type="common">Human</name>
    <dbReference type="NCBI Taxonomy" id="9606"/>
    <lineage>
        <taxon>Eukaryota</taxon>
        <taxon>Metazoa</taxon>
        <taxon>Chordata</taxon>
        <taxon>Craniata</taxon>
        <taxon>Vertebrata</taxon>
        <taxon>Euteleostomi</taxon>
        <taxon>Mammalia</taxon>
        <taxon>Eutheria</taxon>
        <taxon>Euarchontoglires</taxon>
        <taxon>Primates</taxon>
        <taxon>Haplorrhini</taxon>
        <taxon>Catarrhini</taxon>
        <taxon>Hominidae</taxon>
        <taxon>Homo</taxon>
    </lineage>
</organism>
<evidence type="ECO:0000256" key="1">
    <source>
        <dbReference type="SAM" id="MobiDB-lite"/>
    </source>
</evidence>
<evidence type="ECO:0000269" key="2">
    <source>
    </source>
</evidence>
<evidence type="ECO:0000269" key="3">
    <source>
    </source>
</evidence>
<evidence type="ECO:0000269" key="4">
    <source>
    </source>
</evidence>
<evidence type="ECO:0000269" key="5">
    <source>
    </source>
</evidence>
<evidence type="ECO:0000303" key="6">
    <source>
    </source>
</evidence>
<evidence type="ECO:0000305" key="7"/>
<protein>
    <recommendedName>
        <fullName>INO80 complex subunit C</fullName>
    </recommendedName>
    <alternativeName>
        <fullName>IES6 homolog</fullName>
        <shortName>hIes6</shortName>
    </alternativeName>
</protein>
<gene>
    <name type="primary">INO80C</name>
    <name type="synonym">C18orf37</name>
</gene>
<comment type="function">
    <text>Proposed core component of the chromatin remodeling INO80 complex which is involved in transcriptional regulation, DNA replication and probably DNA repair.</text>
</comment>
<comment type="subunit">
    <text evidence="2 3 4 5">Component of the chromatin remodeling INO80 complex; specifically part of a complex module associated with the helicase ATP-binding and the helicase C-terminal domain of INO80. Component of some MLL1/MLL complex, at least composed of the core components KMT2A/MLL1, ASH2L, HCFC1/HCF1, WDR5 and RBBP5, as well as the facultative components BACC1, CHD8, E2F6, HSP70, INO80C, KANSL1, LAS1L, MAX, MCRS1, MGA, MYST1/MOF, PELP1, PHF20, PRP31, RING2, RUVB1/TIP49A, RUVB2/TIP49B, SENP3, TAF1, TAF4, TAF6, TAF7, TAF9 and TEX10.</text>
</comment>
<comment type="interaction">
    <interactant intactId="EBI-722540">
        <id>Q6PI98</id>
    </interactant>
    <interactant intactId="EBI-769418">
        <id>Q9H9F9</id>
        <label>ACTR5</label>
    </interactant>
    <organismsDiffer>false</organismsDiffer>
    <experiments>4</experiments>
</comment>
<comment type="interaction">
    <interactant intactId="EBI-722540">
        <id>Q6PI98</id>
    </interactant>
    <interactant intactId="EBI-350723">
        <id>P50454</id>
        <label>SERPINH1</label>
    </interactant>
    <organismsDiffer>false</organismsDiffer>
    <experiments>3</experiments>
</comment>
<comment type="interaction">
    <interactant intactId="EBI-722540">
        <id>Q6PI98</id>
    </interactant>
    <interactant intactId="EBI-296151">
        <id>P37173</id>
        <label>TGFBR2</label>
    </interactant>
    <organismsDiffer>false</organismsDiffer>
    <experiments>3</experiments>
</comment>
<comment type="subcellular location">
    <subcellularLocation>
        <location evidence="4">Nucleus</location>
    </subcellularLocation>
</comment>
<comment type="alternative products">
    <event type="alternative splicing"/>
    <isoform>
        <id>Q6PI98-1</id>
        <name>1</name>
        <sequence type="displayed"/>
    </isoform>
    <isoform>
        <id>Q6PI98-3</id>
        <name>2</name>
        <sequence type="described" ref="VSP_014531"/>
    </isoform>
    <isoform>
        <id>Q6PI98-4</id>
        <name>3</name>
        <sequence type="described" ref="VSP_044967"/>
    </isoform>
</comment>
<accession>Q6PI98</accession>
<accession>B4DUI4</accession>
<accession>E9PCS7</accession>
<accession>Q86WR1</accession>
<accession>Q8N994</accession>
<feature type="chain" id="PRO_0000079317" description="INO80 complex subunit C">
    <location>
        <begin position="1"/>
        <end position="192"/>
    </location>
</feature>
<feature type="region of interest" description="Disordered" evidence="1">
    <location>
        <begin position="1"/>
        <end position="44"/>
    </location>
</feature>
<feature type="splice variant" id="VSP_044967" description="In isoform 3." evidence="6">
    <original>Q</original>
    <variation>QTCLSPSTMIVRPPQPRGTTCLLPSAMIVRPPQPRGN</variation>
    <location>
        <position position="52"/>
    </location>
</feature>
<feature type="splice variant" id="VSP_014531" description="In isoform 2." evidence="6">
    <original>ANYTDPQSKLRFSTIEEFSYIRRLPSDVVTGYLALRKATSIVP</original>
    <variation>EPPNCFPQRLHQLTFPLAMDEGSNFSRCSPTLVNFGFVFIMAILVGVK</variation>
    <location>
        <begin position="150"/>
        <end position="192"/>
    </location>
</feature>
<feature type="sequence conflict" description="In Ref. 1; BAG62346." evidence="7" ref="1">
    <original>N</original>
    <variation>Y</variation>
    <location>
        <position position="107"/>
    </location>
</feature>
<reference key="1">
    <citation type="journal article" date="2004" name="Nat. Genet.">
        <title>Complete sequencing and characterization of 21,243 full-length human cDNAs.</title>
        <authorList>
            <person name="Ota T."/>
            <person name="Suzuki Y."/>
            <person name="Nishikawa T."/>
            <person name="Otsuki T."/>
            <person name="Sugiyama T."/>
            <person name="Irie R."/>
            <person name="Wakamatsu A."/>
            <person name="Hayashi K."/>
            <person name="Sato H."/>
            <person name="Nagai K."/>
            <person name="Kimura K."/>
            <person name="Makita H."/>
            <person name="Sekine M."/>
            <person name="Obayashi M."/>
            <person name="Nishi T."/>
            <person name="Shibahara T."/>
            <person name="Tanaka T."/>
            <person name="Ishii S."/>
            <person name="Yamamoto J."/>
            <person name="Saito K."/>
            <person name="Kawai Y."/>
            <person name="Isono Y."/>
            <person name="Nakamura Y."/>
            <person name="Nagahari K."/>
            <person name="Murakami K."/>
            <person name="Yasuda T."/>
            <person name="Iwayanagi T."/>
            <person name="Wagatsuma M."/>
            <person name="Shiratori A."/>
            <person name="Sudo H."/>
            <person name="Hosoiri T."/>
            <person name="Kaku Y."/>
            <person name="Kodaira H."/>
            <person name="Kondo H."/>
            <person name="Sugawara M."/>
            <person name="Takahashi M."/>
            <person name="Kanda K."/>
            <person name="Yokoi T."/>
            <person name="Furuya T."/>
            <person name="Kikkawa E."/>
            <person name="Omura Y."/>
            <person name="Abe K."/>
            <person name="Kamihara K."/>
            <person name="Katsuta N."/>
            <person name="Sato K."/>
            <person name="Tanikawa M."/>
            <person name="Yamazaki M."/>
            <person name="Ninomiya K."/>
            <person name="Ishibashi T."/>
            <person name="Yamashita H."/>
            <person name="Murakawa K."/>
            <person name="Fujimori K."/>
            <person name="Tanai H."/>
            <person name="Kimata M."/>
            <person name="Watanabe M."/>
            <person name="Hiraoka S."/>
            <person name="Chiba Y."/>
            <person name="Ishida S."/>
            <person name="Ono Y."/>
            <person name="Takiguchi S."/>
            <person name="Watanabe S."/>
            <person name="Yosida M."/>
            <person name="Hotuta T."/>
            <person name="Kusano J."/>
            <person name="Kanehori K."/>
            <person name="Takahashi-Fujii A."/>
            <person name="Hara H."/>
            <person name="Tanase T.-O."/>
            <person name="Nomura Y."/>
            <person name="Togiya S."/>
            <person name="Komai F."/>
            <person name="Hara R."/>
            <person name="Takeuchi K."/>
            <person name="Arita M."/>
            <person name="Imose N."/>
            <person name="Musashino K."/>
            <person name="Yuuki H."/>
            <person name="Oshima A."/>
            <person name="Sasaki N."/>
            <person name="Aotsuka S."/>
            <person name="Yoshikawa Y."/>
            <person name="Matsunawa H."/>
            <person name="Ichihara T."/>
            <person name="Shiohata N."/>
            <person name="Sano S."/>
            <person name="Moriya S."/>
            <person name="Momiyama H."/>
            <person name="Satoh N."/>
            <person name="Takami S."/>
            <person name="Terashima Y."/>
            <person name="Suzuki O."/>
            <person name="Nakagawa S."/>
            <person name="Senoh A."/>
            <person name="Mizoguchi H."/>
            <person name="Goto Y."/>
            <person name="Shimizu F."/>
            <person name="Wakebe H."/>
            <person name="Hishigaki H."/>
            <person name="Watanabe T."/>
            <person name="Sugiyama A."/>
            <person name="Takemoto M."/>
            <person name="Kawakami B."/>
            <person name="Yamazaki M."/>
            <person name="Watanabe K."/>
            <person name="Kumagai A."/>
            <person name="Itakura S."/>
            <person name="Fukuzumi Y."/>
            <person name="Fujimori Y."/>
            <person name="Komiyama M."/>
            <person name="Tashiro H."/>
            <person name="Tanigami A."/>
            <person name="Fujiwara T."/>
            <person name="Ono T."/>
            <person name="Yamada K."/>
            <person name="Fujii Y."/>
            <person name="Ozaki K."/>
            <person name="Hirao M."/>
            <person name="Ohmori Y."/>
            <person name="Kawabata A."/>
            <person name="Hikiji T."/>
            <person name="Kobatake N."/>
            <person name="Inagaki H."/>
            <person name="Ikema Y."/>
            <person name="Okamoto S."/>
            <person name="Okitani R."/>
            <person name="Kawakami T."/>
            <person name="Noguchi S."/>
            <person name="Itoh T."/>
            <person name="Shigeta K."/>
            <person name="Senba T."/>
            <person name="Matsumura K."/>
            <person name="Nakajima Y."/>
            <person name="Mizuno T."/>
            <person name="Morinaga M."/>
            <person name="Sasaki M."/>
            <person name="Togashi T."/>
            <person name="Oyama M."/>
            <person name="Hata H."/>
            <person name="Watanabe M."/>
            <person name="Komatsu T."/>
            <person name="Mizushima-Sugano J."/>
            <person name="Satoh T."/>
            <person name="Shirai Y."/>
            <person name="Takahashi Y."/>
            <person name="Nakagawa K."/>
            <person name="Okumura K."/>
            <person name="Nagase T."/>
            <person name="Nomura N."/>
            <person name="Kikuchi H."/>
            <person name="Masuho Y."/>
            <person name="Yamashita R."/>
            <person name="Nakai K."/>
            <person name="Yada T."/>
            <person name="Nakamura Y."/>
            <person name="Ohara O."/>
            <person name="Isogai T."/>
            <person name="Sugano S."/>
        </authorList>
    </citation>
    <scope>NUCLEOTIDE SEQUENCE [LARGE SCALE MRNA] (ISOFORMS 2 AND 3)</scope>
    <source>
        <tissue>Fetal brain</tissue>
        <tissue>Skeletal muscle</tissue>
    </source>
</reference>
<reference key="2">
    <citation type="journal article" date="2005" name="Nature">
        <title>DNA sequence and analysis of human chromosome 18.</title>
        <authorList>
            <person name="Nusbaum C."/>
            <person name="Zody M.C."/>
            <person name="Borowsky M.L."/>
            <person name="Kamal M."/>
            <person name="Kodira C.D."/>
            <person name="Taylor T.D."/>
            <person name="Whittaker C.A."/>
            <person name="Chang J.L."/>
            <person name="Cuomo C.A."/>
            <person name="Dewar K."/>
            <person name="FitzGerald M.G."/>
            <person name="Yang X."/>
            <person name="Abouelleil A."/>
            <person name="Allen N.R."/>
            <person name="Anderson S."/>
            <person name="Bloom T."/>
            <person name="Bugalter B."/>
            <person name="Butler J."/>
            <person name="Cook A."/>
            <person name="DeCaprio D."/>
            <person name="Engels R."/>
            <person name="Garber M."/>
            <person name="Gnirke A."/>
            <person name="Hafez N."/>
            <person name="Hall J.L."/>
            <person name="Norman C.H."/>
            <person name="Itoh T."/>
            <person name="Jaffe D.B."/>
            <person name="Kuroki Y."/>
            <person name="Lehoczky J."/>
            <person name="Lui A."/>
            <person name="Macdonald P."/>
            <person name="Mauceli E."/>
            <person name="Mikkelsen T.S."/>
            <person name="Naylor J.W."/>
            <person name="Nicol R."/>
            <person name="Nguyen C."/>
            <person name="Noguchi H."/>
            <person name="O'Leary S.B."/>
            <person name="Piqani B."/>
            <person name="Smith C.L."/>
            <person name="Talamas J.A."/>
            <person name="Topham K."/>
            <person name="Totoki Y."/>
            <person name="Toyoda A."/>
            <person name="Wain H.M."/>
            <person name="Young S.K."/>
            <person name="Zeng Q."/>
            <person name="Zimmer A.R."/>
            <person name="Fujiyama A."/>
            <person name="Hattori M."/>
            <person name="Birren B.W."/>
            <person name="Sakaki Y."/>
            <person name="Lander E.S."/>
        </authorList>
    </citation>
    <scope>NUCLEOTIDE SEQUENCE [LARGE SCALE GENOMIC DNA]</scope>
</reference>
<reference key="3">
    <citation type="journal article" date="2004" name="Genome Res.">
        <title>The status, quality, and expansion of the NIH full-length cDNA project: the Mammalian Gene Collection (MGC).</title>
        <authorList>
            <consortium name="The MGC Project Team"/>
        </authorList>
    </citation>
    <scope>NUCLEOTIDE SEQUENCE [LARGE SCALE MRNA] (ISOFORM 1)</scope>
    <source>
        <tissue>Hypothalamus</tissue>
    </source>
</reference>
<reference key="4">
    <citation type="journal article" date="2005" name="Cell">
        <title>Physical association and coordinate function of the H3 K4 methyltransferase MLL1 and the H4 K16 acetyltransferase MOF.</title>
        <authorList>
            <person name="Dou Y."/>
            <person name="Milne T.A."/>
            <person name="Tackett A.J."/>
            <person name="Smith E.R."/>
            <person name="Fukuda A."/>
            <person name="Wysocka J."/>
            <person name="Allis C.D."/>
            <person name="Chait B.T."/>
            <person name="Hess J.L."/>
            <person name="Roeder R.G."/>
        </authorList>
    </citation>
    <scope>IDENTIFICATION IN THE MLL1/MLL COMPLEX</scope>
</reference>
<reference key="5">
    <citation type="journal article" date="2005" name="J. Biol. Chem.">
        <title>A mammalian chromatin remodeling complex with similarities to the yeast INO80 complex.</title>
        <authorList>
            <person name="Jin J."/>
            <person name="Cai Y."/>
            <person name="Yao T."/>
            <person name="Gottschalk A.J."/>
            <person name="Florens L."/>
            <person name="Swanson S.K."/>
            <person name="Gutierrez J.L."/>
            <person name="Coleman M.K."/>
            <person name="Workman J.L."/>
            <person name="Mushegian A."/>
            <person name="Washburn M.P."/>
            <person name="Conaway R.C."/>
            <person name="Conaway J.W."/>
        </authorList>
    </citation>
    <scope>IDENTIFICATION IN INO80 COMPLEX</scope>
    <scope>IDENTIFICATION BY MASS SPECTROMETRY</scope>
</reference>
<reference key="6">
    <citation type="journal article" date="2008" name="Mol. Cell">
        <title>Distinct modes of regulation of the Uch37 deubiquitinating enzyme in the proteasome and in the Ino80 chromatin-remodeling complex.</title>
        <authorList>
            <person name="Yao T."/>
            <person name="Song L."/>
            <person name="Jin J."/>
            <person name="Cai Y."/>
            <person name="Takahashi H."/>
            <person name="Swanson S.K."/>
            <person name="Washburn M.P."/>
            <person name="Florens L."/>
            <person name="Conaway R.C."/>
            <person name="Cohen R.E."/>
            <person name="Conaway J.W."/>
        </authorList>
    </citation>
    <scope>IDENTIFICATION IN THE INO80 COMPLEX</scope>
    <scope>SUBCELLULAR LOCATION</scope>
    <scope>IDENTIFICATION BY MASS SPECTROMETRY</scope>
</reference>
<reference key="7">
    <citation type="journal article" date="2011" name="J. Biol. Chem.">
        <title>Subunit organization of the human INO80 chromatin remodeling complex: An evolutionarily conserved core complex catalyzes ATP-dependent nucleosome remodeling.</title>
        <authorList>
            <person name="Chen L."/>
            <person name="Cai Y."/>
            <person name="Jin J."/>
            <person name="Florens L."/>
            <person name="Swanson S.K."/>
            <person name="Washburn M.P."/>
            <person name="Conaway J.W."/>
            <person name="Conaway R.C."/>
        </authorList>
    </citation>
    <scope>IDENTIFICATION IN THE INO80 COMPLEX</scope>
</reference>